<sequence length="353" mass="38997">MTAILERRESESLWGRFCNWITSTENRLYIGWFGVLMIPTLLTATSVFIIAFIAAPPVDIDGIREPVSGSLLYGNNIISGAIIPTSAAIGLHFYPIWEAASVDEWLYNGGPYELIVLHFLLGVACYMGREWELSFRLGMRPWIAVAYSAPVAAATAVFLIYPIGQGSFSDGMPLGISGTFNFMIVFQAEHNILMHPFHMLGVAGVFGSSLFSAMHGSLVTSSLIRETTENESANEGYRFGQEEETYNIVAAHGYFGRLIFQYASFNNSRSLHFFLAAWPVVGIWFTALGISTMAFNLNGFNFNQSVVDSQGRVINTWADIINRANLGMEVMHERNAHNFPLDLAAMEAPSVNG</sequence>
<evidence type="ECO:0000255" key="1">
    <source>
        <dbReference type="HAMAP-Rule" id="MF_01379"/>
    </source>
</evidence>
<gene>
    <name evidence="1" type="primary">psbA</name>
</gene>
<reference key="1">
    <citation type="submission" date="1995-09" db="EMBL/GenBank/DDBJ databases">
        <authorList>
            <person name="Mukorah F."/>
            <person name="Dietrich A."/>
            <person name="Sithole-Niang I."/>
        </authorList>
    </citation>
    <scope>NUCLEOTIDE SEQUENCE [GENOMIC DNA]</scope>
    <source>
        <strain>cv. 475/89</strain>
        <tissue>Leaf</tissue>
    </source>
</reference>
<proteinExistence type="inferred from homology"/>
<name>PSBA_VIGUN</name>
<organism>
    <name type="scientific">Vigna unguiculata</name>
    <name type="common">Cowpea</name>
    <dbReference type="NCBI Taxonomy" id="3917"/>
    <lineage>
        <taxon>Eukaryota</taxon>
        <taxon>Viridiplantae</taxon>
        <taxon>Streptophyta</taxon>
        <taxon>Embryophyta</taxon>
        <taxon>Tracheophyta</taxon>
        <taxon>Spermatophyta</taxon>
        <taxon>Magnoliopsida</taxon>
        <taxon>eudicotyledons</taxon>
        <taxon>Gunneridae</taxon>
        <taxon>Pentapetalae</taxon>
        <taxon>rosids</taxon>
        <taxon>fabids</taxon>
        <taxon>Fabales</taxon>
        <taxon>Fabaceae</taxon>
        <taxon>Papilionoideae</taxon>
        <taxon>50 kb inversion clade</taxon>
        <taxon>NPAAA clade</taxon>
        <taxon>indigoferoid/millettioid clade</taxon>
        <taxon>Phaseoleae</taxon>
        <taxon>Vigna</taxon>
    </lineage>
</organism>
<dbReference type="EC" id="1.10.3.9" evidence="1"/>
<dbReference type="EMBL" id="X80932">
    <property type="protein sequence ID" value="CAA56907.1"/>
    <property type="molecule type" value="Genomic_DNA"/>
</dbReference>
<dbReference type="SMR" id="Q33282"/>
<dbReference type="GO" id="GO:0009535">
    <property type="term" value="C:chloroplast thylakoid membrane"/>
    <property type="evidence" value="ECO:0007669"/>
    <property type="project" value="UniProtKB-SubCell"/>
</dbReference>
<dbReference type="GO" id="GO:0009523">
    <property type="term" value="C:photosystem II"/>
    <property type="evidence" value="ECO:0007669"/>
    <property type="project" value="UniProtKB-KW"/>
</dbReference>
<dbReference type="GO" id="GO:0016168">
    <property type="term" value="F:chlorophyll binding"/>
    <property type="evidence" value="ECO:0007669"/>
    <property type="project" value="UniProtKB-UniRule"/>
</dbReference>
<dbReference type="GO" id="GO:0045156">
    <property type="term" value="F:electron transporter, transferring electrons within the cyclic electron transport pathway of photosynthesis activity"/>
    <property type="evidence" value="ECO:0007669"/>
    <property type="project" value="InterPro"/>
</dbReference>
<dbReference type="GO" id="GO:0005506">
    <property type="term" value="F:iron ion binding"/>
    <property type="evidence" value="ECO:0007669"/>
    <property type="project" value="UniProtKB-UniRule"/>
</dbReference>
<dbReference type="GO" id="GO:0016682">
    <property type="term" value="F:oxidoreductase activity, acting on diphenols and related substances as donors, oxygen as acceptor"/>
    <property type="evidence" value="ECO:0007669"/>
    <property type="project" value="UniProtKB-UniRule"/>
</dbReference>
<dbReference type="GO" id="GO:0010242">
    <property type="term" value="F:oxygen evolving activity"/>
    <property type="evidence" value="ECO:0007669"/>
    <property type="project" value="UniProtKB-EC"/>
</dbReference>
<dbReference type="GO" id="GO:0009772">
    <property type="term" value="P:photosynthetic electron transport in photosystem II"/>
    <property type="evidence" value="ECO:0007669"/>
    <property type="project" value="InterPro"/>
</dbReference>
<dbReference type="GO" id="GO:0009635">
    <property type="term" value="P:response to herbicide"/>
    <property type="evidence" value="ECO:0007669"/>
    <property type="project" value="UniProtKB-KW"/>
</dbReference>
<dbReference type="CDD" id="cd09289">
    <property type="entry name" value="Photosystem-II_D1"/>
    <property type="match status" value="1"/>
</dbReference>
<dbReference type="FunFam" id="1.20.85.10:FF:000002">
    <property type="entry name" value="Photosystem II protein D1"/>
    <property type="match status" value="1"/>
</dbReference>
<dbReference type="Gene3D" id="1.20.85.10">
    <property type="entry name" value="Photosystem II protein D1-like"/>
    <property type="match status" value="2"/>
</dbReference>
<dbReference type="HAMAP" id="MF_01379">
    <property type="entry name" value="PSII_PsbA_D1"/>
    <property type="match status" value="1"/>
</dbReference>
<dbReference type="InterPro" id="IPR055266">
    <property type="entry name" value="D1/D2"/>
</dbReference>
<dbReference type="InterPro" id="IPR036854">
    <property type="entry name" value="Photo_II_D1/D2_sf"/>
</dbReference>
<dbReference type="InterPro" id="IPR000484">
    <property type="entry name" value="Photo_RC_L/M"/>
</dbReference>
<dbReference type="InterPro" id="IPR055265">
    <property type="entry name" value="Photo_RC_L/M_CS"/>
</dbReference>
<dbReference type="InterPro" id="IPR005867">
    <property type="entry name" value="PSII_D1"/>
</dbReference>
<dbReference type="NCBIfam" id="TIGR01151">
    <property type="entry name" value="psbA"/>
    <property type="match status" value="1"/>
</dbReference>
<dbReference type="PANTHER" id="PTHR33149:SF12">
    <property type="entry name" value="PHOTOSYSTEM II D2 PROTEIN"/>
    <property type="match status" value="1"/>
</dbReference>
<dbReference type="PANTHER" id="PTHR33149">
    <property type="entry name" value="PHOTOSYSTEM II PROTEIN D1"/>
    <property type="match status" value="1"/>
</dbReference>
<dbReference type="Pfam" id="PF00124">
    <property type="entry name" value="Photo_RC"/>
    <property type="match status" value="1"/>
</dbReference>
<dbReference type="PRINTS" id="PR00256">
    <property type="entry name" value="REACTNCENTRE"/>
</dbReference>
<dbReference type="SUPFAM" id="SSF81483">
    <property type="entry name" value="Bacterial photosystem II reaction centre, L and M subunits"/>
    <property type="match status" value="1"/>
</dbReference>
<dbReference type="PROSITE" id="PS00244">
    <property type="entry name" value="REACTION_CENTER"/>
    <property type="match status" value="1"/>
</dbReference>
<comment type="function">
    <text evidence="1">Photosystem II (PSII) is a light-driven water:plastoquinone oxidoreductase that uses light energy to abstract electrons from H(2)O, generating O(2) and a proton gradient subsequently used for ATP formation. It consists of a core antenna complex that captures photons, and an electron transfer chain that converts photonic excitation into a charge separation. The D1/D2 (PsbA/PsbD) reaction center heterodimer binds P680, the primary electron donor of PSII as well as several subsequent electron acceptors.</text>
</comment>
<comment type="catalytic activity">
    <reaction evidence="1">
        <text>2 a plastoquinone + 4 hnu + 2 H2O = 2 a plastoquinol + O2</text>
        <dbReference type="Rhea" id="RHEA:36359"/>
        <dbReference type="Rhea" id="RHEA-COMP:9561"/>
        <dbReference type="Rhea" id="RHEA-COMP:9562"/>
        <dbReference type="ChEBI" id="CHEBI:15377"/>
        <dbReference type="ChEBI" id="CHEBI:15379"/>
        <dbReference type="ChEBI" id="CHEBI:17757"/>
        <dbReference type="ChEBI" id="CHEBI:30212"/>
        <dbReference type="ChEBI" id="CHEBI:62192"/>
        <dbReference type="EC" id="1.10.3.9"/>
    </reaction>
</comment>
<comment type="cofactor">
    <text evidence="1">The D1/D2 heterodimer binds P680, chlorophylls that are the primary electron donor of PSII, and subsequent electron acceptors. It shares a non-heme iron and each subunit binds pheophytin, quinone, additional chlorophylls, carotenoids and lipids. D1 provides most of the ligands for the Mn4-Ca-O5 cluster of the oxygen-evolving complex (OEC). There is also a Cl(-1) ion associated with D1 and D2, which is required for oxygen evolution. The PSII complex binds additional chlorophylls, carotenoids and specific lipids.</text>
</comment>
<comment type="subunit">
    <text evidence="1">PSII is composed of 1 copy each of membrane proteins PsbA, PsbB, PsbC, PsbD, PsbE, PsbF, PsbH, PsbI, PsbJ, PsbK, PsbL, PsbM, PsbT, PsbX, PsbY, PsbZ, Psb30/Ycf12, at least 3 peripheral proteins of the oxygen-evolving complex and a large number of cofactors. It forms dimeric complexes.</text>
</comment>
<comment type="subcellular location">
    <subcellularLocation>
        <location evidence="1">Plastid</location>
        <location evidence="1">Chloroplast thylakoid membrane</location>
        <topology evidence="1">Multi-pass membrane protein</topology>
    </subcellularLocation>
</comment>
<comment type="PTM">
    <text evidence="1">Tyr-161 forms a radical intermediate that is referred to as redox-active TyrZ, YZ or Y-Z.</text>
</comment>
<comment type="PTM">
    <text evidence="1">C-terminally processed by CTPA; processing is essential to allow assembly of the oxygen-evolving complex and thus photosynthetic growth.</text>
</comment>
<comment type="miscellaneous">
    <text evidence="1">2 of the reaction center chlorophylls (ChlD1 and ChlD2) are entirely coordinated by water.</text>
</comment>
<comment type="miscellaneous">
    <text evidence="1">Herbicides such as atrazine, BNT, diuron or ioxynil bind in the Q(B) binding site and block subsequent electron transfer.</text>
</comment>
<comment type="similarity">
    <text evidence="1">Belongs to the reaction center PufL/M/PsbA/D family.</text>
</comment>
<feature type="initiator methionine" description="Removed" evidence="1">
    <location>
        <position position="1"/>
    </location>
</feature>
<feature type="chain" id="PRO_0000090475" description="Photosystem II protein D1" evidence="1">
    <location>
        <begin position="2"/>
        <end position="344"/>
    </location>
</feature>
<feature type="propeptide" id="PRO_0000316489" evidence="1">
    <location>
        <begin position="345"/>
        <end position="353"/>
    </location>
</feature>
<feature type="transmembrane region" description="Helical" evidence="1">
    <location>
        <begin position="29"/>
        <end position="46"/>
    </location>
</feature>
<feature type="transmembrane region" description="Helical" evidence="1">
    <location>
        <begin position="118"/>
        <end position="133"/>
    </location>
</feature>
<feature type="transmembrane region" description="Helical" evidence="1">
    <location>
        <begin position="142"/>
        <end position="156"/>
    </location>
</feature>
<feature type="transmembrane region" description="Helical" evidence="1">
    <location>
        <begin position="197"/>
        <end position="218"/>
    </location>
</feature>
<feature type="transmembrane region" description="Helical" evidence="1">
    <location>
        <begin position="274"/>
        <end position="288"/>
    </location>
</feature>
<feature type="binding site" description="axial binding residue" evidence="1">
    <location>
        <position position="118"/>
    </location>
    <ligand>
        <name>chlorophyll a</name>
        <dbReference type="ChEBI" id="CHEBI:58416"/>
        <label>ChlzD1</label>
    </ligand>
    <ligandPart>
        <name>Mg</name>
        <dbReference type="ChEBI" id="CHEBI:25107"/>
    </ligandPart>
</feature>
<feature type="binding site" evidence="1">
    <location>
        <position position="126"/>
    </location>
    <ligand>
        <name>pheophytin a</name>
        <dbReference type="ChEBI" id="CHEBI:136840"/>
        <label>D1</label>
    </ligand>
</feature>
<feature type="binding site" evidence="1">
    <location>
        <position position="170"/>
    </location>
    <ligand>
        <name>[CaMn4O5] cluster</name>
        <dbReference type="ChEBI" id="CHEBI:189552"/>
    </ligand>
</feature>
<feature type="binding site" evidence="1">
    <location>
        <position position="189"/>
    </location>
    <ligand>
        <name>[CaMn4O5] cluster</name>
        <dbReference type="ChEBI" id="CHEBI:189552"/>
    </ligand>
</feature>
<feature type="binding site" description="axial binding residue" evidence="1">
    <location>
        <position position="198"/>
    </location>
    <ligand>
        <name>chlorophyll a</name>
        <dbReference type="ChEBI" id="CHEBI:58416"/>
        <label>PD1</label>
    </ligand>
    <ligandPart>
        <name>Mg</name>
        <dbReference type="ChEBI" id="CHEBI:25107"/>
    </ligandPart>
</feature>
<feature type="binding site" evidence="1">
    <location>
        <position position="215"/>
    </location>
    <ligand>
        <name>a quinone</name>
        <dbReference type="ChEBI" id="CHEBI:132124"/>
        <label>B</label>
    </ligand>
</feature>
<feature type="binding site" evidence="1">
    <location>
        <position position="215"/>
    </location>
    <ligand>
        <name>Fe cation</name>
        <dbReference type="ChEBI" id="CHEBI:24875"/>
        <note>ligand shared with heterodimeric partner</note>
    </ligand>
</feature>
<feature type="binding site" evidence="1">
    <location>
        <begin position="264"/>
        <end position="265"/>
    </location>
    <ligand>
        <name>a quinone</name>
        <dbReference type="ChEBI" id="CHEBI:132124"/>
        <label>B</label>
    </ligand>
</feature>
<feature type="binding site" evidence="1">
    <location>
        <position position="272"/>
    </location>
    <ligand>
        <name>Fe cation</name>
        <dbReference type="ChEBI" id="CHEBI:24875"/>
        <note>ligand shared with heterodimeric partner</note>
    </ligand>
</feature>
<feature type="binding site" evidence="1">
    <location>
        <position position="332"/>
    </location>
    <ligand>
        <name>[CaMn4O5] cluster</name>
        <dbReference type="ChEBI" id="CHEBI:189552"/>
    </ligand>
</feature>
<feature type="binding site" evidence="1">
    <location>
        <position position="333"/>
    </location>
    <ligand>
        <name>[CaMn4O5] cluster</name>
        <dbReference type="ChEBI" id="CHEBI:189552"/>
    </ligand>
</feature>
<feature type="binding site" evidence="1">
    <location>
        <position position="342"/>
    </location>
    <ligand>
        <name>[CaMn4O5] cluster</name>
        <dbReference type="ChEBI" id="CHEBI:189552"/>
    </ligand>
</feature>
<feature type="binding site" evidence="1">
    <location>
        <position position="344"/>
    </location>
    <ligand>
        <name>[CaMn4O5] cluster</name>
        <dbReference type="ChEBI" id="CHEBI:189552"/>
    </ligand>
</feature>
<feature type="site" description="Tyrosine radical intermediate" evidence="1">
    <location>
        <position position="161"/>
    </location>
</feature>
<feature type="site" description="Stabilizes free radical intermediate" evidence="1">
    <location>
        <position position="190"/>
    </location>
</feature>
<feature type="site" description="Cleavage; by CTPA" evidence="1">
    <location>
        <begin position="344"/>
        <end position="345"/>
    </location>
</feature>
<feature type="modified residue" description="N-acetylthreonine" evidence="1">
    <location>
        <position position="2"/>
    </location>
</feature>
<feature type="modified residue" description="Phosphothreonine" evidence="1">
    <location>
        <position position="2"/>
    </location>
</feature>
<geneLocation type="chloroplast"/>
<accession>Q33282</accession>
<protein>
    <recommendedName>
        <fullName evidence="1">Photosystem II protein D1</fullName>
        <shortName evidence="1">PSII D1 protein</shortName>
        <ecNumber evidence="1">1.10.3.9</ecNumber>
    </recommendedName>
    <alternativeName>
        <fullName evidence="1">Photosystem II Q(B) protein</fullName>
    </alternativeName>
</protein>
<keyword id="KW-0007">Acetylation</keyword>
<keyword id="KW-0106">Calcium</keyword>
<keyword id="KW-0148">Chlorophyll</keyword>
<keyword id="KW-0150">Chloroplast</keyword>
<keyword id="KW-0157">Chromophore</keyword>
<keyword id="KW-0249">Electron transport</keyword>
<keyword id="KW-0359">Herbicide resistance</keyword>
<keyword id="KW-0408">Iron</keyword>
<keyword id="KW-0460">Magnesium</keyword>
<keyword id="KW-0464">Manganese</keyword>
<keyword id="KW-0472">Membrane</keyword>
<keyword id="KW-0479">Metal-binding</keyword>
<keyword id="KW-0560">Oxidoreductase</keyword>
<keyword id="KW-0597">Phosphoprotein</keyword>
<keyword id="KW-0602">Photosynthesis</keyword>
<keyword id="KW-0604">Photosystem II</keyword>
<keyword id="KW-0934">Plastid</keyword>
<keyword id="KW-0793">Thylakoid</keyword>
<keyword id="KW-0812">Transmembrane</keyword>
<keyword id="KW-1133">Transmembrane helix</keyword>
<keyword id="KW-0813">Transport</keyword>